<dbReference type="EMBL" id="CH916375">
    <property type="protein sequence ID" value="EDV98219.1"/>
    <property type="molecule type" value="Genomic_DNA"/>
</dbReference>
<dbReference type="SMR" id="B4JW81"/>
<dbReference type="FunCoup" id="B4JW81">
    <property type="interactions" value="682"/>
</dbReference>
<dbReference type="STRING" id="7222.B4JW81"/>
<dbReference type="EnsemblMetazoa" id="FBtr0158402">
    <property type="protein sequence ID" value="FBpp0156894"/>
    <property type="gene ID" value="FBgn0130445"/>
</dbReference>
<dbReference type="EnsemblMetazoa" id="XM_001995111.3">
    <property type="protein sequence ID" value="XP_001995147.1"/>
    <property type="gene ID" value="LOC6569131"/>
</dbReference>
<dbReference type="GeneID" id="6569131"/>
<dbReference type="KEGG" id="dgr:6569131"/>
<dbReference type="CTD" id="9391"/>
<dbReference type="eggNOG" id="KOG0645">
    <property type="taxonomic scope" value="Eukaryota"/>
</dbReference>
<dbReference type="HOGENOM" id="CLU_000288_57_8_1"/>
<dbReference type="InParanoid" id="B4JW81"/>
<dbReference type="OMA" id="IREIRWS"/>
<dbReference type="OrthoDB" id="284782at2759"/>
<dbReference type="PhylomeDB" id="B4JW81"/>
<dbReference type="Proteomes" id="UP000001070">
    <property type="component" value="Unassembled WGS sequence"/>
</dbReference>
<dbReference type="GO" id="GO:0097361">
    <property type="term" value="C:cytosolic [4Fe-4S] assembly targeting complex"/>
    <property type="evidence" value="ECO:0007669"/>
    <property type="project" value="EnsemblMetazoa"/>
</dbReference>
<dbReference type="GO" id="GO:1902695">
    <property type="term" value="C:metallochaperone complex"/>
    <property type="evidence" value="ECO:0007669"/>
    <property type="project" value="EnsemblMetazoa"/>
</dbReference>
<dbReference type="GO" id="GO:0016226">
    <property type="term" value="P:iron-sulfur cluster assembly"/>
    <property type="evidence" value="ECO:0007669"/>
    <property type="project" value="UniProtKB-UniRule"/>
</dbReference>
<dbReference type="GO" id="GO:0051604">
    <property type="term" value="P:protein maturation"/>
    <property type="evidence" value="ECO:0000250"/>
    <property type="project" value="UniProtKB"/>
</dbReference>
<dbReference type="CDD" id="cd00200">
    <property type="entry name" value="WD40"/>
    <property type="match status" value="1"/>
</dbReference>
<dbReference type="FunFam" id="2.130.10.10:FF:000136">
    <property type="entry name" value="Probable cytosolic iron-sulfur protein assembly protein CIAO1"/>
    <property type="match status" value="1"/>
</dbReference>
<dbReference type="Gene3D" id="2.130.10.10">
    <property type="entry name" value="YVTN repeat-like/Quinoprotein amine dehydrogenase"/>
    <property type="match status" value="1"/>
</dbReference>
<dbReference type="HAMAP" id="MF_03037">
    <property type="entry name" value="ciao1"/>
    <property type="match status" value="1"/>
</dbReference>
<dbReference type="InterPro" id="IPR028608">
    <property type="entry name" value="CIAO1/Cia1"/>
</dbReference>
<dbReference type="InterPro" id="IPR020472">
    <property type="entry name" value="G-protein_beta_WD-40_rep"/>
</dbReference>
<dbReference type="InterPro" id="IPR015943">
    <property type="entry name" value="WD40/YVTN_repeat-like_dom_sf"/>
</dbReference>
<dbReference type="InterPro" id="IPR019775">
    <property type="entry name" value="WD40_repeat_CS"/>
</dbReference>
<dbReference type="InterPro" id="IPR036322">
    <property type="entry name" value="WD40_repeat_dom_sf"/>
</dbReference>
<dbReference type="InterPro" id="IPR001680">
    <property type="entry name" value="WD40_rpt"/>
</dbReference>
<dbReference type="PANTHER" id="PTHR19920:SF0">
    <property type="entry name" value="CYTOSOLIC IRON-SULFUR PROTEIN ASSEMBLY PROTEIN CIAO1-RELATED"/>
    <property type="match status" value="1"/>
</dbReference>
<dbReference type="PANTHER" id="PTHR19920">
    <property type="entry name" value="WD40 PROTEIN CIAO1"/>
    <property type="match status" value="1"/>
</dbReference>
<dbReference type="Pfam" id="PF00400">
    <property type="entry name" value="WD40"/>
    <property type="match status" value="7"/>
</dbReference>
<dbReference type="PRINTS" id="PR00320">
    <property type="entry name" value="GPROTEINBRPT"/>
</dbReference>
<dbReference type="SMART" id="SM00320">
    <property type="entry name" value="WD40"/>
    <property type="match status" value="7"/>
</dbReference>
<dbReference type="SUPFAM" id="SSF50978">
    <property type="entry name" value="WD40 repeat-like"/>
    <property type="match status" value="1"/>
</dbReference>
<dbReference type="PROSITE" id="PS00678">
    <property type="entry name" value="WD_REPEATS_1"/>
    <property type="match status" value="1"/>
</dbReference>
<dbReference type="PROSITE" id="PS50082">
    <property type="entry name" value="WD_REPEATS_2"/>
    <property type="match status" value="6"/>
</dbReference>
<dbReference type="PROSITE" id="PS50294">
    <property type="entry name" value="WD_REPEATS_REGION"/>
    <property type="match status" value="1"/>
</dbReference>
<evidence type="ECO:0000255" key="1">
    <source>
        <dbReference type="HAMAP-Rule" id="MF_03037"/>
    </source>
</evidence>
<sequence length="331" mass="36648">MGRLILEHTLQGHKGRIWGVAWHPKGNSFASCGEDKAIRIWSQSGNTWTTKTILSDGHKRTIREVRWSPCGEYLASASFDATTAIWSKHECNATLEGHENEVKSVSWSQSGGLLATCSRDKSVWIWEVAGDDEFECAAVLNAHTQDVKRVVWHPSKEILASASYDNTIKMYAESALDSDWDCTATLSSHTSTVWSIDFEADGERLVSCSDDTTLKIWRAYHPGNEAGIATPDKTTVWKCVCTVAGQHSRAVYDVSWCKLTGLIASACGDDGIRIFKESSDSKRDEPTFELLTAEESAHEQDVNAVEWNPVTAGQLISCSDDGTIKIWKLQE</sequence>
<keyword id="KW-1185">Reference proteome</keyword>
<keyword id="KW-0677">Repeat</keyword>
<keyword id="KW-0853">WD repeat</keyword>
<accession>B4JW81</accession>
<proteinExistence type="inferred from homology"/>
<feature type="chain" id="PRO_0000382485" description="Probable cytosolic iron-sulfur protein assembly protein Ciao1">
    <location>
        <begin position="1"/>
        <end position="331"/>
    </location>
</feature>
<feature type="repeat" description="WD 1">
    <location>
        <begin position="12"/>
        <end position="51"/>
    </location>
</feature>
<feature type="repeat" description="WD 2">
    <location>
        <begin position="57"/>
        <end position="96"/>
    </location>
</feature>
<feature type="repeat" description="WD 3">
    <location>
        <begin position="97"/>
        <end position="136"/>
    </location>
</feature>
<feature type="repeat" description="WD 4">
    <location>
        <begin position="142"/>
        <end position="181"/>
    </location>
</feature>
<feature type="repeat" description="WD 5">
    <location>
        <begin position="188"/>
        <end position="227"/>
    </location>
</feature>
<feature type="repeat" description="WD 6">
    <location>
        <begin position="246"/>
        <end position="285"/>
    </location>
</feature>
<feature type="repeat" description="WD 7">
    <location>
        <begin position="297"/>
        <end position="331"/>
    </location>
</feature>
<protein>
    <recommendedName>
        <fullName evidence="1">Probable cytosolic iron-sulfur protein assembly protein Ciao1</fullName>
    </recommendedName>
</protein>
<reference key="1">
    <citation type="journal article" date="2007" name="Nature">
        <title>Evolution of genes and genomes on the Drosophila phylogeny.</title>
        <authorList>
            <consortium name="Drosophila 12 genomes consortium"/>
        </authorList>
    </citation>
    <scope>NUCLEOTIDE SEQUENCE [LARGE SCALE GENOMIC DNA]</scope>
    <source>
        <strain>Tucson 15287-2541.00</strain>
    </source>
</reference>
<name>CIAO1_DROGR</name>
<gene>
    <name evidence="1" type="primary">Ciao1</name>
    <name type="ORF">GH22988</name>
</gene>
<comment type="function">
    <text evidence="1">Essential component of the cytosolic iron-sulfur (Fe/S) protein assembly machinery. Required for the maturation of extramitochondrial Fe/S proteins.</text>
</comment>
<comment type="similarity">
    <text evidence="1">Belongs to the WD repeat CIA1 family.</text>
</comment>
<organism>
    <name type="scientific">Drosophila grimshawi</name>
    <name type="common">Hawaiian fruit fly</name>
    <name type="synonym">Idiomyia grimshawi</name>
    <dbReference type="NCBI Taxonomy" id="7222"/>
    <lineage>
        <taxon>Eukaryota</taxon>
        <taxon>Metazoa</taxon>
        <taxon>Ecdysozoa</taxon>
        <taxon>Arthropoda</taxon>
        <taxon>Hexapoda</taxon>
        <taxon>Insecta</taxon>
        <taxon>Pterygota</taxon>
        <taxon>Neoptera</taxon>
        <taxon>Endopterygota</taxon>
        <taxon>Diptera</taxon>
        <taxon>Brachycera</taxon>
        <taxon>Muscomorpha</taxon>
        <taxon>Ephydroidea</taxon>
        <taxon>Drosophilidae</taxon>
        <taxon>Drosophila</taxon>
        <taxon>Hawaiian Drosophila</taxon>
    </lineage>
</organism>